<reference key="1">
    <citation type="submission" date="2008-04" db="EMBL/GenBank/DDBJ databases">
        <authorList>
            <consortium name="NIH - Zebrafish Gene Collection (ZGC) project"/>
        </authorList>
    </citation>
    <scope>NUCLEOTIDE SEQUENCE [LARGE SCALE MRNA]</scope>
</reference>
<reference key="2">
    <citation type="journal article" date="2011" name="Genes Dev.">
        <title>An ARL3-UNC119-RP2 GTPase cycle targets myristoylated NPHP3 to the primary cilium.</title>
        <authorList>
            <person name="Wright K.J."/>
            <person name="Baye L.M."/>
            <person name="Olivier-Mason A."/>
            <person name="Mukhopadhyay S."/>
            <person name="Sang L."/>
            <person name="Kwong M."/>
            <person name="Wang W."/>
            <person name="Pretorius P.R."/>
            <person name="Sheffield V.C."/>
            <person name="Sengupta P."/>
            <person name="Slusarski D.C."/>
            <person name="Jackson P.K."/>
        </authorList>
    </citation>
    <scope>FUNCTION</scope>
</reference>
<reference key="3">
    <citation type="journal article" date="2019" name="J. Immunol.">
        <title>The Autoimmune Susceptibility Gene C5orf30 Regulates Macrophage-Mediated Resolution of Inflammation.</title>
        <authorList>
            <person name="Dorris E.R."/>
            <person name="Tazzyman S.J."/>
            <person name="Moylett J."/>
            <person name="Ramamoorthi N."/>
            <person name="Hackney J."/>
            <person name="Townsend M."/>
            <person name="Muthana M."/>
            <person name="Lewis M.J."/>
            <person name="Pitzalis C."/>
            <person name="Wilson A.G."/>
        </authorList>
    </citation>
    <scope>FUNCTION</scope>
    <scope>DISRUPTION PHENOTYPE</scope>
</reference>
<proteinExistence type="evidence at transcript level"/>
<feature type="chain" id="PRO_0000359747" description="Macrophage immunometabolism regulator">
    <location>
        <begin position="1"/>
        <end position="206"/>
    </location>
</feature>
<sequence length="206" mass="22904">MEMDASGASRAPISVLPAAEVKSTLKPEADKPRCSSTPCSPIKSTVSGYQILHMNSNYLVGFTTGEELLKLAQKWSSPDSSNTEALPSPIKKPVDLGLHRASRIYKAKSRYYQPYDIPAVNGRRRRRMPSSGDSCLKSIVSGEPSKALHGPLPLCLLKGKRVYSKSLDYLNLDKMSLREPVDTEVLQYQLQHLNLRGERVFTRNKT</sequence>
<keyword id="KW-0966">Cell projection</keyword>
<keyword id="KW-0969">Cilium</keyword>
<keyword id="KW-0970">Cilium biogenesis/degradation</keyword>
<keyword id="KW-0963">Cytoplasm</keyword>
<keyword id="KW-0395">Inflammatory response</keyword>
<keyword id="KW-0653">Protein transport</keyword>
<keyword id="KW-1185">Reference proteome</keyword>
<keyword id="KW-0813">Transport</keyword>
<comment type="function">
    <text evidence="1 2 3">May play a role in immune regulation through regulation of the macrophage function (By similarity). Involved in the recruitment of macrophages in response to injury (PubMed:30659109). May also play a role in trafficking of proteins via its interaction with unc119 family cargo adapters (By similarity). May play a role in ciliary membrane localization (PubMed:22085962).</text>
</comment>
<comment type="function">
    <text evidence="1">Regulates the macrophage function, by enhancing the resolution of inflammation and wound repair functions mediated by M2 macrophages. The regulation of macrophage function is, due at least in part, to the role of C5orf30 in regulating ability to inhibit glycolysis. Probably plays alaso a role in trafficking of proteins via its interaction with UNC119 and UNC119B cargo adapters: may help the release of UNC119 and UNC119B cargo or the recycling of UNC119 and UNC119B. May play a role in ciliary membrane localization via its interaction with UNC119B and protein transport into photoreceptor cells.</text>
</comment>
<comment type="subunit">
    <text evidence="1">Interacts with unc119 family proteins; interaction preferentially takes place when unc119 proteins are unliganded with myristoylated proteins.</text>
</comment>
<comment type="subcellular location">
    <subcellularLocation>
        <location evidence="1">Cytoplasm</location>
    </subcellularLocation>
    <subcellularLocation>
        <location evidence="1">Cell projection</location>
        <location evidence="1">Cilium</location>
    </subcellularLocation>
</comment>
<comment type="disruption phenotype">
    <text evidence="3">Morpholino knockdown increases the recruitment of macrophages in response to injury.</text>
</comment>
<comment type="similarity">
    <text evidence="4">Belongs to the UNC119-binding protein family.</text>
</comment>
<dbReference type="EMBL" id="BC162867">
    <property type="protein sequence ID" value="AAI62867.1"/>
    <property type="molecule type" value="mRNA"/>
</dbReference>
<dbReference type="EMBL" id="BC162875">
    <property type="protein sequence ID" value="AAI62875.1"/>
    <property type="molecule type" value="mRNA"/>
</dbReference>
<dbReference type="RefSeq" id="NP_001122229.1">
    <property type="nucleotide sequence ID" value="NM_001128757.1"/>
</dbReference>
<dbReference type="FunCoup" id="B3DHS1">
    <property type="interactions" value="1108"/>
</dbReference>
<dbReference type="STRING" id="7955.ENSDARP00000098404"/>
<dbReference type="PaxDb" id="7955-ENSDARP00000098404"/>
<dbReference type="Ensembl" id="ENSDART00000110735">
    <property type="protein sequence ID" value="ENSDARP00000098404"/>
    <property type="gene ID" value="ENSDARG00000093498"/>
</dbReference>
<dbReference type="GeneID" id="570279"/>
<dbReference type="KEGG" id="dre:570279"/>
<dbReference type="AGR" id="ZFIN:ZDB-GENE-081022-94"/>
<dbReference type="CTD" id="90355"/>
<dbReference type="ZFIN" id="ZDB-GENE-081022-94">
    <property type="gene designation" value="macir"/>
</dbReference>
<dbReference type="eggNOG" id="ENOG502QRGS">
    <property type="taxonomic scope" value="Eukaryota"/>
</dbReference>
<dbReference type="HOGENOM" id="CLU_082309_0_0_1"/>
<dbReference type="InParanoid" id="B3DHS1"/>
<dbReference type="OMA" id="LAHKCTG"/>
<dbReference type="OrthoDB" id="9859373at2759"/>
<dbReference type="PhylomeDB" id="B3DHS1"/>
<dbReference type="TreeFam" id="TF331553"/>
<dbReference type="PRO" id="PR:B3DHS1"/>
<dbReference type="Proteomes" id="UP000000437">
    <property type="component" value="Chromosome 10"/>
</dbReference>
<dbReference type="Bgee" id="ENSDARG00000093498">
    <property type="expression patterns" value="Expressed in retina and 15 other cell types or tissues"/>
</dbReference>
<dbReference type="GO" id="GO:0035869">
    <property type="term" value="C:ciliary transition zone"/>
    <property type="evidence" value="ECO:0000250"/>
    <property type="project" value="UniProtKB"/>
</dbReference>
<dbReference type="GO" id="GO:0005737">
    <property type="term" value="C:cytoplasm"/>
    <property type="evidence" value="ECO:0000250"/>
    <property type="project" value="UniProtKB"/>
</dbReference>
<dbReference type="GO" id="GO:0060271">
    <property type="term" value="P:cilium assembly"/>
    <property type="evidence" value="ECO:0000315"/>
    <property type="project" value="UniProtKB"/>
</dbReference>
<dbReference type="GO" id="GO:0006954">
    <property type="term" value="P:inflammatory response"/>
    <property type="evidence" value="ECO:0007669"/>
    <property type="project" value="UniProtKB-KW"/>
</dbReference>
<dbReference type="GO" id="GO:0070121">
    <property type="term" value="P:Kupffer's vesicle development"/>
    <property type="evidence" value="ECO:0000315"/>
    <property type="project" value="ZFIN"/>
</dbReference>
<dbReference type="GO" id="GO:1900016">
    <property type="term" value="P:negative regulation of cytokine production involved in inflammatory response"/>
    <property type="evidence" value="ECO:0000318"/>
    <property type="project" value="GO_Central"/>
</dbReference>
<dbReference type="GO" id="GO:0010764">
    <property type="term" value="P:negative regulation of fibroblast migration"/>
    <property type="evidence" value="ECO:0000318"/>
    <property type="project" value="GO_Central"/>
</dbReference>
<dbReference type="GO" id="GO:0050728">
    <property type="term" value="P:negative regulation of inflammatory response"/>
    <property type="evidence" value="ECO:0000250"/>
    <property type="project" value="UniProtKB"/>
</dbReference>
<dbReference type="GO" id="GO:0010760">
    <property type="term" value="P:negative regulation of macrophage chemotaxis"/>
    <property type="evidence" value="ECO:0000315"/>
    <property type="project" value="ZFIN"/>
</dbReference>
<dbReference type="GO" id="GO:0015031">
    <property type="term" value="P:protein transport"/>
    <property type="evidence" value="ECO:0007669"/>
    <property type="project" value="UniProtKB-KW"/>
</dbReference>
<dbReference type="GO" id="GO:1905521">
    <property type="term" value="P:regulation of macrophage migration"/>
    <property type="evidence" value="ECO:0000315"/>
    <property type="project" value="UniProtKB"/>
</dbReference>
<dbReference type="GO" id="GO:0061041">
    <property type="term" value="P:regulation of wound healing"/>
    <property type="evidence" value="ECO:0000315"/>
    <property type="project" value="ZFIN"/>
</dbReference>
<dbReference type="InterPro" id="IPR029219">
    <property type="entry name" value="UNC119-bd"/>
</dbReference>
<dbReference type="PANTHER" id="PTHR31224:SF2">
    <property type="entry name" value="MACROPHAGE IMMUNOMETABOLISM REGULATOR"/>
    <property type="match status" value="1"/>
</dbReference>
<dbReference type="PANTHER" id="PTHR31224">
    <property type="entry name" value="UNC119-BINDING PROTEIN C5ORF30"/>
    <property type="match status" value="1"/>
</dbReference>
<dbReference type="Pfam" id="PF15435">
    <property type="entry name" value="UNC119_bdg"/>
    <property type="match status" value="1"/>
</dbReference>
<gene>
    <name type="primary">macir</name>
    <name type="ORF">zgc:194273</name>
    <name type="ORF">zgc:194281</name>
</gene>
<organism>
    <name type="scientific">Danio rerio</name>
    <name type="common">Zebrafish</name>
    <name type="synonym">Brachydanio rerio</name>
    <dbReference type="NCBI Taxonomy" id="7955"/>
    <lineage>
        <taxon>Eukaryota</taxon>
        <taxon>Metazoa</taxon>
        <taxon>Chordata</taxon>
        <taxon>Craniata</taxon>
        <taxon>Vertebrata</taxon>
        <taxon>Euteleostomi</taxon>
        <taxon>Actinopterygii</taxon>
        <taxon>Neopterygii</taxon>
        <taxon>Teleostei</taxon>
        <taxon>Ostariophysi</taxon>
        <taxon>Cypriniformes</taxon>
        <taxon>Danionidae</taxon>
        <taxon>Danioninae</taxon>
        <taxon>Danio</taxon>
    </lineage>
</organism>
<name>MACIR_DANRE</name>
<accession>B3DHS1</accession>
<evidence type="ECO:0000250" key="1">
    <source>
        <dbReference type="UniProtKB" id="Q96GV9"/>
    </source>
</evidence>
<evidence type="ECO:0000269" key="2">
    <source>
    </source>
</evidence>
<evidence type="ECO:0000269" key="3">
    <source>
    </source>
</evidence>
<evidence type="ECO:0000305" key="4"/>
<protein>
    <recommendedName>
        <fullName>Macrophage immunometabolism regulator</fullName>
    </recommendedName>
</protein>